<reference key="1">
    <citation type="journal article" date="1996" name="Mol. Cell. Biol.">
        <title>Molecular cloning of Drosophila mus308, a gene involved in DNA cross-link repair with homology to prokaryotic DNA polymerase I genes.</title>
        <authorList>
            <person name="Harris P.V."/>
            <person name="Mazina O.M."/>
            <person name="Leonhardt E.A."/>
            <person name="Case R.B."/>
            <person name="Boyd J.B."/>
            <person name="Burtis K.C."/>
        </authorList>
    </citation>
    <scope>NUCLEOTIDE SEQUENCE [GENOMIC DNA]</scope>
    <scope>DISRUPTION PHENOTYPE</scope>
    <source>
        <strain>Iso-1</strain>
    </source>
</reference>
<reference key="2">
    <citation type="journal article" date="2000" name="Science">
        <title>The genome sequence of Drosophila melanogaster.</title>
        <authorList>
            <person name="Adams M.D."/>
            <person name="Celniker S.E."/>
            <person name="Holt R.A."/>
            <person name="Evans C.A."/>
            <person name="Gocayne J.D."/>
            <person name="Amanatides P.G."/>
            <person name="Scherer S.E."/>
            <person name="Li P.W."/>
            <person name="Hoskins R.A."/>
            <person name="Galle R.F."/>
            <person name="George R.A."/>
            <person name="Lewis S.E."/>
            <person name="Richards S."/>
            <person name="Ashburner M."/>
            <person name="Henderson S.N."/>
            <person name="Sutton G.G."/>
            <person name="Wortman J.R."/>
            <person name="Yandell M.D."/>
            <person name="Zhang Q."/>
            <person name="Chen L.X."/>
            <person name="Brandon R.C."/>
            <person name="Rogers Y.-H.C."/>
            <person name="Blazej R.G."/>
            <person name="Champe M."/>
            <person name="Pfeiffer B.D."/>
            <person name="Wan K.H."/>
            <person name="Doyle C."/>
            <person name="Baxter E.G."/>
            <person name="Helt G."/>
            <person name="Nelson C.R."/>
            <person name="Miklos G.L.G."/>
            <person name="Abril J.F."/>
            <person name="Agbayani A."/>
            <person name="An H.-J."/>
            <person name="Andrews-Pfannkoch C."/>
            <person name="Baldwin D."/>
            <person name="Ballew R.M."/>
            <person name="Basu A."/>
            <person name="Baxendale J."/>
            <person name="Bayraktaroglu L."/>
            <person name="Beasley E.M."/>
            <person name="Beeson K.Y."/>
            <person name="Benos P.V."/>
            <person name="Berman B.P."/>
            <person name="Bhandari D."/>
            <person name="Bolshakov S."/>
            <person name="Borkova D."/>
            <person name="Botchan M.R."/>
            <person name="Bouck J."/>
            <person name="Brokstein P."/>
            <person name="Brottier P."/>
            <person name="Burtis K.C."/>
            <person name="Busam D.A."/>
            <person name="Butler H."/>
            <person name="Cadieu E."/>
            <person name="Center A."/>
            <person name="Chandra I."/>
            <person name="Cherry J.M."/>
            <person name="Cawley S."/>
            <person name="Dahlke C."/>
            <person name="Davenport L.B."/>
            <person name="Davies P."/>
            <person name="de Pablos B."/>
            <person name="Delcher A."/>
            <person name="Deng Z."/>
            <person name="Mays A.D."/>
            <person name="Dew I."/>
            <person name="Dietz S.M."/>
            <person name="Dodson K."/>
            <person name="Doup L.E."/>
            <person name="Downes M."/>
            <person name="Dugan-Rocha S."/>
            <person name="Dunkov B.C."/>
            <person name="Dunn P."/>
            <person name="Durbin K.J."/>
            <person name="Evangelista C.C."/>
            <person name="Ferraz C."/>
            <person name="Ferriera S."/>
            <person name="Fleischmann W."/>
            <person name="Fosler C."/>
            <person name="Gabrielian A.E."/>
            <person name="Garg N.S."/>
            <person name="Gelbart W.M."/>
            <person name="Glasser K."/>
            <person name="Glodek A."/>
            <person name="Gong F."/>
            <person name="Gorrell J.H."/>
            <person name="Gu Z."/>
            <person name="Guan P."/>
            <person name="Harris M."/>
            <person name="Harris N.L."/>
            <person name="Harvey D.A."/>
            <person name="Heiman T.J."/>
            <person name="Hernandez J.R."/>
            <person name="Houck J."/>
            <person name="Hostin D."/>
            <person name="Houston K.A."/>
            <person name="Howland T.J."/>
            <person name="Wei M.-H."/>
            <person name="Ibegwam C."/>
            <person name="Jalali M."/>
            <person name="Kalush F."/>
            <person name="Karpen G.H."/>
            <person name="Ke Z."/>
            <person name="Kennison J.A."/>
            <person name="Ketchum K.A."/>
            <person name="Kimmel B.E."/>
            <person name="Kodira C.D."/>
            <person name="Kraft C.L."/>
            <person name="Kravitz S."/>
            <person name="Kulp D."/>
            <person name="Lai Z."/>
            <person name="Lasko P."/>
            <person name="Lei Y."/>
            <person name="Levitsky A.A."/>
            <person name="Li J.H."/>
            <person name="Li Z."/>
            <person name="Liang Y."/>
            <person name="Lin X."/>
            <person name="Liu X."/>
            <person name="Mattei B."/>
            <person name="McIntosh T.C."/>
            <person name="McLeod M.P."/>
            <person name="McPherson D."/>
            <person name="Merkulov G."/>
            <person name="Milshina N.V."/>
            <person name="Mobarry C."/>
            <person name="Morris J."/>
            <person name="Moshrefi A."/>
            <person name="Mount S.M."/>
            <person name="Moy M."/>
            <person name="Murphy B."/>
            <person name="Murphy L."/>
            <person name="Muzny D.M."/>
            <person name="Nelson D.L."/>
            <person name="Nelson D.R."/>
            <person name="Nelson K.A."/>
            <person name="Nixon K."/>
            <person name="Nusskern D.R."/>
            <person name="Pacleb J.M."/>
            <person name="Palazzolo M."/>
            <person name="Pittman G.S."/>
            <person name="Pan S."/>
            <person name="Pollard J."/>
            <person name="Puri V."/>
            <person name="Reese M.G."/>
            <person name="Reinert K."/>
            <person name="Remington K."/>
            <person name="Saunders R.D.C."/>
            <person name="Scheeler F."/>
            <person name="Shen H."/>
            <person name="Shue B.C."/>
            <person name="Siden-Kiamos I."/>
            <person name="Simpson M."/>
            <person name="Skupski M.P."/>
            <person name="Smith T.J."/>
            <person name="Spier E."/>
            <person name="Spradling A.C."/>
            <person name="Stapleton M."/>
            <person name="Strong R."/>
            <person name="Sun E."/>
            <person name="Svirskas R."/>
            <person name="Tector C."/>
            <person name="Turner R."/>
            <person name="Venter E."/>
            <person name="Wang A.H."/>
            <person name="Wang X."/>
            <person name="Wang Z.-Y."/>
            <person name="Wassarman D.A."/>
            <person name="Weinstock G.M."/>
            <person name="Weissenbach J."/>
            <person name="Williams S.M."/>
            <person name="Woodage T."/>
            <person name="Worley K.C."/>
            <person name="Wu D."/>
            <person name="Yang S."/>
            <person name="Yao Q.A."/>
            <person name="Ye J."/>
            <person name="Yeh R.-F."/>
            <person name="Zaveri J.S."/>
            <person name="Zhan M."/>
            <person name="Zhang G."/>
            <person name="Zhao Q."/>
            <person name="Zheng L."/>
            <person name="Zheng X.H."/>
            <person name="Zhong F.N."/>
            <person name="Zhong W."/>
            <person name="Zhou X."/>
            <person name="Zhu S.C."/>
            <person name="Zhu X."/>
            <person name="Smith H.O."/>
            <person name="Gibbs R.A."/>
            <person name="Myers E.W."/>
            <person name="Rubin G.M."/>
            <person name="Venter J.C."/>
        </authorList>
    </citation>
    <scope>NUCLEOTIDE SEQUENCE [LARGE SCALE GENOMIC DNA]</scope>
    <source>
        <strain>Berkeley</strain>
    </source>
</reference>
<reference key="3">
    <citation type="journal article" date="2002" name="Genome Biol.">
        <title>Annotation of the Drosophila melanogaster euchromatic genome: a systematic review.</title>
        <authorList>
            <person name="Misra S."/>
            <person name="Crosby M.A."/>
            <person name="Mungall C.J."/>
            <person name="Matthews B.B."/>
            <person name="Campbell K.S."/>
            <person name="Hradecky P."/>
            <person name="Huang Y."/>
            <person name="Kaminker J.S."/>
            <person name="Millburn G.H."/>
            <person name="Prochnik S.E."/>
            <person name="Smith C.D."/>
            <person name="Tupy J.L."/>
            <person name="Whitfield E.J."/>
            <person name="Bayraktaroglu L."/>
            <person name="Berman B.P."/>
            <person name="Bettencourt B.R."/>
            <person name="Celniker S.E."/>
            <person name="de Grey A.D.N.J."/>
            <person name="Drysdale R.A."/>
            <person name="Harris N.L."/>
            <person name="Richter J."/>
            <person name="Russo S."/>
            <person name="Schroeder A.J."/>
            <person name="Shu S.Q."/>
            <person name="Stapleton M."/>
            <person name="Yamada C."/>
            <person name="Ashburner M."/>
            <person name="Gelbart W.M."/>
            <person name="Rubin G.M."/>
            <person name="Lewis S.E."/>
        </authorList>
    </citation>
    <scope>GENOME REANNOTATION</scope>
    <source>
        <strain>Berkeley</strain>
    </source>
</reference>
<reference key="4">
    <citation type="submission" date="2008-09" db="EMBL/GenBank/DDBJ databases">
        <authorList>
            <person name="Carlson J."/>
            <person name="Booth B."/>
            <person name="Frise E."/>
            <person name="Park S."/>
            <person name="Wan K."/>
            <person name="Yu C."/>
            <person name="Celniker S."/>
        </authorList>
    </citation>
    <scope>NUCLEOTIDE SEQUENCE [LARGE SCALE MRNA]</scope>
    <source>
        <strain>Berkeley</strain>
    </source>
</reference>
<reference key="5">
    <citation type="journal article" date="1999" name="Mutat. Res.">
        <title>A new DNA polymerase species from Drosophila melanogaster: a probable mus308 gene product.</title>
        <authorList>
            <person name="Oshige M."/>
            <person name="Aoyagi N."/>
            <person name="Harris P.V."/>
            <person name="Burtis K.C."/>
            <person name="Sakaguchi K."/>
        </authorList>
    </citation>
    <scope>FUNCTION</scope>
    <scope>CATALYTIC ACTIVITY</scope>
    <scope>COFACTOR</scope>
    <scope>ACTIVITY REGULATION</scope>
    <scope>BIOPHYSICOCHEMICAL PROPERTIES</scope>
</reference>
<reference key="6">
    <citation type="journal article" date="2000" name="Mol. Gen. Genet.">
        <title>The mus308 locus of Drosophila melanogaster is implicated in the bypass of ENU-induced O-alkylpyrimidine adducts.</title>
        <authorList>
            <person name="Tosal L."/>
            <person name="Comendador M.A."/>
            <person name="Sierra L.M."/>
        </authorList>
    </citation>
    <scope>FUNCTION</scope>
</reference>
<reference key="7">
    <citation type="journal article" date="2005" name="DNA Repair">
        <title>The Drosophila mus 308 gene product, implicated in tolerance of DNA interstrand crosslinks, is a nuclear protein found in both ovaries and embryos.</title>
        <authorList>
            <person name="Pang M."/>
            <person name="McConnell M."/>
            <person name="Fisher P.A."/>
        </authorList>
    </citation>
    <scope>FUNCTION</scope>
    <scope>CATALYTIC ACTIVITY</scope>
    <scope>ACTIVITY REGULATION</scope>
    <scope>SUBCELLULAR LOCATION</scope>
    <scope>TISSUE SPECIFICITY</scope>
    <scope>DEVELOPMENTAL STAGE</scope>
    <scope>PROTEOLYTIC CLEAVAGE</scope>
</reference>
<reference key="8">
    <citation type="journal article" date="2010" name="J. Nucleic Acids">
        <title>Mus308 processes oxygen and nitrogen ethylation DNA damage in germ cells of Drosophila.</title>
        <authorList>
            <person name="Diaz-Valdes N."/>
            <person name="Comendador M.A."/>
            <person name="Sierra L.M."/>
        </authorList>
    </citation>
    <scope>FUNCTION</scope>
</reference>
<reference key="9">
    <citation type="journal article" date="2010" name="PLoS Genet.">
        <title>Dual roles for DNA polymerase theta in alternative end-joining repair of double-strand breaks in Drosophila.</title>
        <authorList>
            <person name="Chan S.H."/>
            <person name="Yu A.M."/>
            <person name="McVey M."/>
        </authorList>
    </citation>
    <scope>FUNCTION</scope>
    <scope>MUTAGENESIS OF GLY-621 AND PRO-781</scope>
</reference>
<reference key="10">
    <citation type="journal article" date="2016" name="Proc. Natl. Acad. Sci. U.S.A.">
        <title>Multiple mechanisms contribute to double-strand break repair at rereplication forks in Drosophila follicle cells.</title>
        <authorList>
            <person name="Alexander J.L."/>
            <person name="Beagan K."/>
            <person name="Orr-Weaver T.L."/>
            <person name="McVey M."/>
        </authorList>
    </citation>
    <scope>FUNCTION</scope>
    <scope>DISRUPTION PHENOTYPE</scope>
</reference>
<reference key="11">
    <citation type="journal article" date="2017" name="PLoS Genet.">
        <title>Drosophila DNA polymerase theta utilizes both helicase-like and polymerase domains during microhomology-mediated end joining and interstrand crosslink repair.</title>
        <authorList>
            <person name="Beagan K."/>
            <person name="Armstrong R.L."/>
            <person name="Witsell A."/>
            <person name="Roy U."/>
            <person name="Renedo N."/>
            <person name="Baker A.E."/>
            <person name="Schaerer O.D."/>
            <person name="McVey M."/>
        </authorList>
    </citation>
    <scope>FUNCTION</scope>
    <scope>CATALYTIC ACTIVITY</scope>
    <scope>MUTAGENESIS OF LYS-262 AND 1825-ASP-PHE-1826</scope>
</reference>
<dbReference type="EC" id="2.7.7.7" evidence="4 6 10"/>
<dbReference type="EMBL" id="L76559">
    <property type="protein sequence ID" value="AAB67306.1"/>
    <property type="molecule type" value="Genomic_DNA"/>
</dbReference>
<dbReference type="EMBL" id="AE014297">
    <property type="protein sequence ID" value="AAF54858.1"/>
    <property type="molecule type" value="Genomic_DNA"/>
</dbReference>
<dbReference type="EMBL" id="BT021359">
    <property type="protein sequence ID" value="AAX33507.1"/>
    <property type="molecule type" value="mRNA"/>
</dbReference>
<dbReference type="EMBL" id="BT044169">
    <property type="protein sequence ID" value="ACH92234.1"/>
    <property type="molecule type" value="mRNA"/>
</dbReference>
<dbReference type="PIR" id="T13858">
    <property type="entry name" value="T13858"/>
</dbReference>
<dbReference type="RefSeq" id="NP_524333.1">
    <property type="nucleotide sequence ID" value="NM_079609.3"/>
</dbReference>
<dbReference type="SMR" id="O18475"/>
<dbReference type="FunCoup" id="O18475">
    <property type="interactions" value="861"/>
</dbReference>
<dbReference type="IntAct" id="O18475">
    <property type="interactions" value="4"/>
</dbReference>
<dbReference type="STRING" id="7227.FBpp0082131"/>
<dbReference type="GlyGen" id="O18475">
    <property type="glycosylation" value="1 site"/>
</dbReference>
<dbReference type="PaxDb" id="7227-FBpp0082131"/>
<dbReference type="EnsemblMetazoa" id="FBtr0082662">
    <property type="protein sequence ID" value="FBpp0082131"/>
    <property type="gene ID" value="FBgn0002905"/>
</dbReference>
<dbReference type="GeneID" id="41571"/>
<dbReference type="KEGG" id="dme:Dmel_CG6019"/>
<dbReference type="UCSC" id="CG6019-RA">
    <property type="organism name" value="d. melanogaster"/>
</dbReference>
<dbReference type="AGR" id="FB:FBgn0002905"/>
<dbReference type="CTD" id="10721"/>
<dbReference type="FlyBase" id="FBgn0002905">
    <property type="gene designation" value="PolQ"/>
</dbReference>
<dbReference type="VEuPathDB" id="VectorBase:FBgn0002905"/>
<dbReference type="eggNOG" id="KOG0950">
    <property type="taxonomic scope" value="Eukaryota"/>
</dbReference>
<dbReference type="GeneTree" id="ENSGT00940000158694"/>
<dbReference type="HOGENOM" id="CLU_000818_0_0_1"/>
<dbReference type="InParanoid" id="O18475"/>
<dbReference type="OMA" id="FHNMCQQ"/>
<dbReference type="OrthoDB" id="275278at2759"/>
<dbReference type="PhylomeDB" id="O18475"/>
<dbReference type="Reactome" id="R-DME-5685939">
    <property type="pathway name" value="HDR through MMEJ (alt-NHEJ)"/>
</dbReference>
<dbReference type="SignaLink" id="O18475"/>
<dbReference type="BioGRID-ORCS" id="41571">
    <property type="hits" value="0 hits in 1 CRISPR screen"/>
</dbReference>
<dbReference type="GenomeRNAi" id="41571"/>
<dbReference type="PRO" id="PR:O18475"/>
<dbReference type="Proteomes" id="UP000000803">
    <property type="component" value="Chromosome 3R"/>
</dbReference>
<dbReference type="Bgee" id="FBgn0002905">
    <property type="expression patterns" value="Expressed in spermatocyte in testis and 47 other cell types or tissues"/>
</dbReference>
<dbReference type="GO" id="GO:0042645">
    <property type="term" value="C:mitochondrial nucleoid"/>
    <property type="evidence" value="ECO:0000250"/>
    <property type="project" value="FlyBase"/>
</dbReference>
<dbReference type="GO" id="GO:0005634">
    <property type="term" value="C:nucleus"/>
    <property type="evidence" value="ECO:0000250"/>
    <property type="project" value="FlyBase"/>
</dbReference>
<dbReference type="GO" id="GO:0051575">
    <property type="term" value="F:5'-deoxyribose-5-phosphate lyase activity"/>
    <property type="evidence" value="ECO:0000250"/>
    <property type="project" value="FlyBase"/>
</dbReference>
<dbReference type="GO" id="GO:0005524">
    <property type="term" value="F:ATP binding"/>
    <property type="evidence" value="ECO:0007669"/>
    <property type="project" value="UniProtKB-KW"/>
</dbReference>
<dbReference type="GO" id="GO:0003677">
    <property type="term" value="F:DNA binding"/>
    <property type="evidence" value="ECO:0007669"/>
    <property type="project" value="InterPro"/>
</dbReference>
<dbReference type="GO" id="GO:0003887">
    <property type="term" value="F:DNA-directed DNA polymerase activity"/>
    <property type="evidence" value="ECO:0000314"/>
    <property type="project" value="FlyBase"/>
</dbReference>
<dbReference type="GO" id="GO:0016787">
    <property type="term" value="F:hydrolase activity"/>
    <property type="evidence" value="ECO:0007669"/>
    <property type="project" value="UniProtKB-KW"/>
</dbReference>
<dbReference type="GO" id="GO:0017116">
    <property type="term" value="F:single-stranded DNA helicase activity"/>
    <property type="evidence" value="ECO:0000250"/>
    <property type="project" value="FlyBase"/>
</dbReference>
<dbReference type="GO" id="GO:0071897">
    <property type="term" value="P:DNA biosynthetic process"/>
    <property type="evidence" value="ECO:0000314"/>
    <property type="project" value="FlyBase"/>
</dbReference>
<dbReference type="GO" id="GO:0000731">
    <property type="term" value="P:DNA synthesis involved in DNA repair"/>
    <property type="evidence" value="ECO:0000314"/>
    <property type="project" value="FlyBase"/>
</dbReference>
<dbReference type="GO" id="GO:0097681">
    <property type="term" value="P:double-strand break repair via alternative nonhomologous end joining"/>
    <property type="evidence" value="ECO:0000315"/>
    <property type="project" value="UniProtKB"/>
</dbReference>
<dbReference type="GO" id="GO:1901255">
    <property type="term" value="P:nucleotide-excision repair involved in interstrand cross-link repair"/>
    <property type="evidence" value="ECO:0000315"/>
    <property type="project" value="FlyBase"/>
</dbReference>
<dbReference type="GO" id="GO:0031297">
    <property type="term" value="P:replication fork processing"/>
    <property type="evidence" value="ECO:0000316"/>
    <property type="project" value="UniProtKB"/>
</dbReference>
<dbReference type="CDD" id="cd18026">
    <property type="entry name" value="DEXHc_POLQ-like"/>
    <property type="match status" value="1"/>
</dbReference>
<dbReference type="CDD" id="cd08638">
    <property type="entry name" value="DNA_pol_A_theta"/>
    <property type="match status" value="1"/>
</dbReference>
<dbReference type="CDD" id="cd18795">
    <property type="entry name" value="SF2_C_Ski2"/>
    <property type="match status" value="1"/>
</dbReference>
<dbReference type="FunFam" id="1.10.150.20:FF:000070">
    <property type="entry name" value="DNA polymerase I, putative"/>
    <property type="match status" value="1"/>
</dbReference>
<dbReference type="FunFam" id="1.10.3380.20:FF:000001">
    <property type="entry name" value="DNA polymerase theta"/>
    <property type="match status" value="1"/>
</dbReference>
<dbReference type="FunFam" id="3.30.420.10:FF:000448">
    <property type="entry name" value="DNA polymerase theta"/>
    <property type="match status" value="1"/>
</dbReference>
<dbReference type="FunFam" id="3.40.50.300:FF:000813">
    <property type="entry name" value="helicase POLQ-like isoform X1"/>
    <property type="match status" value="1"/>
</dbReference>
<dbReference type="Gene3D" id="1.10.3380.20">
    <property type="match status" value="1"/>
</dbReference>
<dbReference type="Gene3D" id="3.30.70.370">
    <property type="match status" value="1"/>
</dbReference>
<dbReference type="Gene3D" id="1.10.150.20">
    <property type="entry name" value="5' to 3' exonuclease, C-terminal subdomain"/>
    <property type="match status" value="1"/>
</dbReference>
<dbReference type="Gene3D" id="3.40.50.300">
    <property type="entry name" value="P-loop containing nucleotide triphosphate hydrolases"/>
    <property type="match status" value="2"/>
</dbReference>
<dbReference type="Gene3D" id="3.30.420.10">
    <property type="entry name" value="Ribonuclease H-like superfamily/Ribonuclease H"/>
    <property type="match status" value="1"/>
</dbReference>
<dbReference type="Gene3D" id="1.20.1060.10">
    <property type="entry name" value="Taq DNA Polymerase, Chain T, domain 4"/>
    <property type="match status" value="1"/>
</dbReference>
<dbReference type="InterPro" id="IPR011545">
    <property type="entry name" value="DEAD/DEAH_box_helicase_dom"/>
</dbReference>
<dbReference type="InterPro" id="IPR001098">
    <property type="entry name" value="DNA-dir_DNA_pol_A_palm_dom"/>
</dbReference>
<dbReference type="InterPro" id="IPR043502">
    <property type="entry name" value="DNA/RNA_pol_sf"/>
</dbReference>
<dbReference type="InterPro" id="IPR002298">
    <property type="entry name" value="DNA_polymerase_A"/>
</dbReference>
<dbReference type="InterPro" id="IPR014001">
    <property type="entry name" value="Helicase_ATP-bd"/>
</dbReference>
<dbReference type="InterPro" id="IPR001650">
    <property type="entry name" value="Helicase_C-like"/>
</dbReference>
<dbReference type="InterPro" id="IPR046931">
    <property type="entry name" value="HTH_61"/>
</dbReference>
<dbReference type="InterPro" id="IPR027417">
    <property type="entry name" value="P-loop_NTPase"/>
</dbReference>
<dbReference type="InterPro" id="IPR048960">
    <property type="entry name" value="POLQ-like_helical"/>
</dbReference>
<dbReference type="InterPro" id="IPR036397">
    <property type="entry name" value="RNaseH_sf"/>
</dbReference>
<dbReference type="InterPro" id="IPR036390">
    <property type="entry name" value="WH_DNA-bd_sf"/>
</dbReference>
<dbReference type="PANTHER" id="PTHR10133">
    <property type="entry name" value="DNA POLYMERASE I"/>
    <property type="match status" value="1"/>
</dbReference>
<dbReference type="PANTHER" id="PTHR10133:SF62">
    <property type="entry name" value="DNA POLYMERASE THETA"/>
    <property type="match status" value="1"/>
</dbReference>
<dbReference type="Pfam" id="PF00270">
    <property type="entry name" value="DEAD"/>
    <property type="match status" value="1"/>
</dbReference>
<dbReference type="Pfam" id="PF00476">
    <property type="entry name" value="DNA_pol_A"/>
    <property type="match status" value="1"/>
</dbReference>
<dbReference type="Pfam" id="PF00271">
    <property type="entry name" value="Helicase_C"/>
    <property type="match status" value="1"/>
</dbReference>
<dbReference type="Pfam" id="PF20470">
    <property type="entry name" value="HTH_61"/>
    <property type="match status" value="1"/>
</dbReference>
<dbReference type="Pfam" id="PF21099">
    <property type="entry name" value="POLQ_helical"/>
    <property type="match status" value="1"/>
</dbReference>
<dbReference type="PRINTS" id="PR00868">
    <property type="entry name" value="DNAPOLI"/>
</dbReference>
<dbReference type="SMART" id="SM00487">
    <property type="entry name" value="DEXDc"/>
    <property type="match status" value="1"/>
</dbReference>
<dbReference type="SMART" id="SM00490">
    <property type="entry name" value="HELICc"/>
    <property type="match status" value="1"/>
</dbReference>
<dbReference type="SMART" id="SM00482">
    <property type="entry name" value="POLAc"/>
    <property type="match status" value="1"/>
</dbReference>
<dbReference type="SUPFAM" id="SSF56672">
    <property type="entry name" value="DNA/RNA polymerases"/>
    <property type="match status" value="1"/>
</dbReference>
<dbReference type="SUPFAM" id="SSF52540">
    <property type="entry name" value="P-loop containing nucleoside triphosphate hydrolases"/>
    <property type="match status" value="1"/>
</dbReference>
<dbReference type="SUPFAM" id="SSF158702">
    <property type="entry name" value="Sec63 N-terminal domain-like"/>
    <property type="match status" value="1"/>
</dbReference>
<dbReference type="SUPFAM" id="SSF46785">
    <property type="entry name" value="Winged helix' DNA-binding domain"/>
    <property type="match status" value="1"/>
</dbReference>
<dbReference type="PROSITE" id="PS51192">
    <property type="entry name" value="HELICASE_ATP_BIND_1"/>
    <property type="match status" value="1"/>
</dbReference>
<dbReference type="PROSITE" id="PS51194">
    <property type="entry name" value="HELICASE_CTER"/>
    <property type="match status" value="1"/>
</dbReference>
<proteinExistence type="evidence at protein level"/>
<organism>
    <name type="scientific">Drosophila melanogaster</name>
    <name type="common">Fruit fly</name>
    <dbReference type="NCBI Taxonomy" id="7227"/>
    <lineage>
        <taxon>Eukaryota</taxon>
        <taxon>Metazoa</taxon>
        <taxon>Ecdysozoa</taxon>
        <taxon>Arthropoda</taxon>
        <taxon>Hexapoda</taxon>
        <taxon>Insecta</taxon>
        <taxon>Pterygota</taxon>
        <taxon>Neoptera</taxon>
        <taxon>Endopterygota</taxon>
        <taxon>Diptera</taxon>
        <taxon>Brachycera</taxon>
        <taxon>Muscomorpha</taxon>
        <taxon>Ephydroidea</taxon>
        <taxon>Drosophilidae</taxon>
        <taxon>Drosophila</taxon>
        <taxon>Sophophora</taxon>
    </lineage>
</organism>
<gene>
    <name evidence="15" type="primary">PolQ</name>
    <name evidence="13" type="synonym">DNApol-theta</name>
    <name evidence="14" type="synonym">DNApolQ</name>
    <name evidence="13 15" type="synonym">mus308</name>
    <name evidence="15" type="ORF">CG6019</name>
</gene>
<accession>O18475</accession>
<accession>Q5BI65</accession>
<feature type="chain" id="PRO_0000432704" description="DNA polymerase theta">
    <location>
        <begin position="1"/>
        <end position="2059"/>
    </location>
</feature>
<feature type="domain" description="Helicase ATP-binding" evidence="1">
    <location>
        <begin position="243"/>
        <end position="416"/>
    </location>
</feature>
<feature type="domain" description="Helicase C-terminal" evidence="2">
    <location>
        <begin position="464"/>
        <end position="666"/>
    </location>
</feature>
<feature type="region of interest" description="Disordered" evidence="3">
    <location>
        <begin position="25"/>
        <end position="45"/>
    </location>
</feature>
<feature type="region of interest" description="Disordered" evidence="3">
    <location>
        <begin position="1052"/>
        <end position="1073"/>
    </location>
</feature>
<feature type="region of interest" description="Disordered" evidence="3">
    <location>
        <begin position="1168"/>
        <end position="1190"/>
    </location>
</feature>
<feature type="region of interest" description="Disordered" evidence="3">
    <location>
        <begin position="1204"/>
        <end position="1274"/>
    </location>
</feature>
<feature type="region of interest" description="Disordered" evidence="3">
    <location>
        <begin position="1330"/>
        <end position="1372"/>
    </location>
</feature>
<feature type="short sequence motif" description="DEAH box" evidence="1">
    <location>
        <begin position="357"/>
        <end position="360"/>
    </location>
</feature>
<feature type="compositionally biased region" description="Polar residues" evidence="3">
    <location>
        <begin position="30"/>
        <end position="45"/>
    </location>
</feature>
<feature type="compositionally biased region" description="Polar residues" evidence="3">
    <location>
        <begin position="1062"/>
        <end position="1071"/>
    </location>
</feature>
<feature type="compositionally biased region" description="Polar residues" evidence="3">
    <location>
        <begin position="1213"/>
        <end position="1274"/>
    </location>
</feature>
<feature type="compositionally biased region" description="Basic and acidic residues" evidence="3">
    <location>
        <begin position="1355"/>
        <end position="1365"/>
    </location>
</feature>
<feature type="binding site" evidence="1">
    <location>
        <begin position="256"/>
        <end position="263"/>
    </location>
    <ligand>
        <name>ATP</name>
        <dbReference type="ChEBI" id="CHEBI:30616"/>
    </ligand>
</feature>
<feature type="mutagenesis site" description="Increases sensitivity to DNA interstrand damage induced by DNA-cross-linking agents. Reduces annealing and extension of single-strand DNA molecules in vitro but does not affect end-joining frequency." evidence="10">
    <original>K</original>
    <variation>A</variation>
    <location>
        <position position="262"/>
    </location>
</feature>
<feature type="mutagenesis site" description="In mus308(3294); flies are unable to repair interstrand cross-links." evidence="7">
    <original>G</original>
    <variation>S</variation>
    <location>
        <position position="621"/>
    </location>
</feature>
<feature type="mutagenesis site" description="In mus308(D5); flies are unable to repair interstrand cross-links." evidence="7">
    <original>P</original>
    <variation>L</variation>
    <location>
        <position position="781"/>
    </location>
</feature>
<feature type="mutagenesis site" description="Increases sensitivity to DNA interstrand damage induced by DNA-cross-linking agents and ionizing radiation. Reduces alternative end-joining repair." evidence="10">
    <original>DF</original>
    <variation>AA</variation>
    <location>
        <begin position="1825"/>
        <end position="1826"/>
    </location>
</feature>
<feature type="sequence conflict" description="In Ref. 4; AAX33507." evidence="14" ref="4">
    <original>R</original>
    <variation>H</variation>
    <location>
        <position position="1930"/>
    </location>
</feature>
<comment type="function">
    <text evidence="4 5 6 7 8 9 10">Multifunctional protein with both DNA polymerase and ATPase activities (PubMed:10343651, PubMed:15961355). Might have 3' to 5' exonuclease activity (PubMed:10343651). Plays a role in different DNA repair pathways such as DNA strand cross-link repair and microhomology-mediated end-joining (MMEJ), an alternative non-homologous end-joining (NHEJ) machinery triggered in response to double-strand breaks (PubMed:20617203, PubMed:20936147, PubMed:28542210). MMEJ is an error-prone repair pathway that produces deletions of sequences from the strand being repaired and promotes genomic rearrangements, such as telomere fusions (PubMed:20617203). Utilizes short microhomologies present in partially and fully single-stranded DNA (ssDNA) as primers for DNA synthesis (PubMed:28542210). Prefers poly(dA)/oligo(dT) as a template-primer (PubMed:10343651). The ATPase activity is necessary during interstrand cross-link (ICL) repair and has a critical role in generating templated insertions during MMEJ (PubMed:28542210). Necessary for processing DNA damage induced by oxygen and N-ethylation (PubMed:10732683, PubMed:20936147). In follicle cells, contributes to double-strand break repair at physiological rereplication forks necessary for survival of fertilized eggs (PubMed:20936147, PubMed:27849606).</text>
</comment>
<comment type="catalytic activity">
    <reaction evidence="4 6 10">
        <text>DNA(n) + a 2'-deoxyribonucleoside 5'-triphosphate = DNA(n+1) + diphosphate</text>
        <dbReference type="Rhea" id="RHEA:22508"/>
        <dbReference type="Rhea" id="RHEA-COMP:17339"/>
        <dbReference type="Rhea" id="RHEA-COMP:17340"/>
        <dbReference type="ChEBI" id="CHEBI:33019"/>
        <dbReference type="ChEBI" id="CHEBI:61560"/>
        <dbReference type="ChEBI" id="CHEBI:173112"/>
        <dbReference type="EC" id="2.7.7.7"/>
    </reaction>
</comment>
<comment type="cofactor">
    <cofactor evidence="4">
        <name>Mg(2+)</name>
        <dbReference type="ChEBI" id="CHEBI:18420"/>
    </cofactor>
</comment>
<comment type="activity regulation">
    <text evidence="4 6">Resistant to aphidicolin, but sensitive to dideoxythymindine triphosphate (ddTTP) and N-ethyl malemide (NEM).</text>
</comment>
<comment type="biophysicochemical properties">
    <phDependence>
        <text evidence="4">Optimum pH is 7.5.</text>
    </phDependence>
</comment>
<comment type="subcellular location">
    <subcellularLocation>
        <location evidence="6">Nucleus</location>
    </subcellularLocation>
</comment>
<comment type="tissue specificity">
    <text evidence="6">Expressed in ovaries (at protein level).</text>
</comment>
<comment type="developmental stage">
    <text evidence="6">Expressed from before hatching of first instar larvae (at protein level).</text>
</comment>
<comment type="PTM">
    <text evidence="6">In adult males, cleaved to produce a 100 kDa form.</text>
</comment>
<comment type="disruption phenotype">
    <text evidence="9 11">Hypersensitivity to DNA-cross-linking agents (PubMed:8816490). In follicle cells, results in reduced fork progression in physiological rereplication regions necessary for the amplification of the eggshell (chorion) protein genes (PubMed:27849606). Reduces mRNA expression of chorion protein genes which results in compromised eggshell integrity and reduced egg hatching frequency (PubMed:27849606). In follicle cells, simultaneous knockout of DNAlig4 and DNApol-theta reduces rereplication origin firing (PubMed:27849606).</text>
</comment>
<comment type="similarity">
    <text evidence="14">Belongs to the DNA polymerase type-A family.</text>
</comment>
<protein>
    <recommendedName>
        <fullName evidence="12">DNA polymerase theta</fullName>
        <ecNumber evidence="4 6 10">2.7.7.7</ecNumber>
    </recommendedName>
    <alternativeName>
        <fullName evidence="13">Mutagen-sensitive protein 308</fullName>
    </alternativeName>
</protein>
<name>DPOLQ_DROME</name>
<sequence>MAFSQSFNFGNSTLMALEKGMQADDKENAQPGNGNIQVQSAGNEVNSEIQEINSEFFRDEFSYEVNQAHKPAEQSVVNVSQVQQHMAVVSNQDSEDQSRSSALNDQICTQSSFEGEDAGADAVLDQPNLDENSFLCPAQDEEASEQLKEDILHSHSVLAKQEFYQEISQVTQNLSSMSPNQLRVSPNSSRIREAMPERPAMPLDLNTLRSISAWNLPMSIQAEYKKKGVVDMFDWQVECLSKPRLLFEHCNLVYSAPTSAGKTLVSEILMLKTVLERGKKVLLILPFISVVREKMFYMQDLLTPAGYRVEGFYGGYTPPGGFESLHVAICTIEKANSIVNKLMEQGKLETIGMVVVDEVHLISDKGRGYILELLLAKILYMSRRNGLQIQVITMSATLENVQLLQSWLDAELYITNYRPVALKEMIKVGTVIYDHRLKLVRDVAKQKVLLKGLENDSDDVALLCIETLLEGCSVIVFCPSKDWCENLAVQLATAIHVQIKSETVLGQRLRTNLNPRAIAEVKQQLRDIPTGLDGVMSKAITYACAFHHAGLTTEERDIIEASFKAGALKVLVATSTLSSGVNLPARRVLIRSPLFGGKQMSSLTYRQMIGRAGRMGKDTLGESILICNEINARMGRDLVVSELQPITSCLDMDGSTHLKRALLEVISSGVANTKEDIDFFVNCTLLSAQKAFHAKEKPPDEESDANYINDALDFLVEYEFVRLQRNEERETAVYVATRLGAACLASSMPPTDGLILFAELQKSRRSFVLESELHAVYLVTPYSVCYQLQDIDWLLYVHMWEKLSSPMKKVGELVGVRDAFLYKALRGQTKLDYKQMQIHKRFYIALALEELVNETPINVVVHKYKCHRGMLQSLQQMASTFAGIVTAFCNSLQWSTLALIVSQFKDRLFFGIHRDLIDLMRIPDLSQKRARALFDAGITSLVELAGADPVELEKVLYNSISFDSAKQHDHENADEAAKRNVVRNFYITGKAGMTVSEAAKLLIGEARQFVQHEIGLGTIKWTQTQAGVEIASRAIHDGGEVDLHMSLEEEQPPVKRKLSIEENGTANSQKNPRLETVVDTQRGYKVDKNIANQSKMNPNLKEIDAQNKARRNSTAHMDNLNPISNDPCQNNVNVKTAQPIISNLNDIQKQGSQIEKMKINPATVVCSPQLANEEKPSTSQSARRKLVNEGMAERRRVALMKIQQRTQKENQSKDQPIQASRSNQLSSPVNRTPANRWTQSENPNNEMNNSQLPRRNPRNQSPVPNANRTASRKVSNAEEDLFMADDSFMLNTGLAAALTAAESKIASCTEADVIPSSQPKEPEVIGALTPHASRLKRSDQLRSQRIQSPSPTPQREIEIDLESKNESNGVSSMEISDMSMENPLMKNPLHLNASHIMSCSKVDETASSFSSIDIIDVCGHRNAFQAAIIEINNATRLGFSVGLQAQAGKQKPLIGSNLLINQVAAAENREAAARERVLFQVDDTNFISGVSFCLADNVAYYWNMQIDERAAYQGVPTPLKVQELCNLMARKDLTLVMHDGKEQLKMLRKAIPQLKRISAKLEDAKVANWLLQPDKTVNFLNMCQTFAPECTGLANLCGSGRGYSSYGLDTSSAILPRIRTAIESCVTLHILQGQTENLSRIGNGDLLKFFHDIEMPIQLTLCQMELVGFPAQKQRLQQLYQRMVAVMKKVETKIYEQHGSRFNLGSSQAVAKVLGLHRKAKGRVTTSRQVLEKLNSPISHLILGYRKLSGLLAKSIQPLMECCQADRIHGQSITYTATGRISMTEPNLQNVAKEFSIQVGSDVVHISCRSPFMPTDESRCLLSADFCQLEMRILAHMSQDKALLEVMKSSQDLFIAIAAHWNKIEESEVTQDLRNSTKQVCYGIVYGMGMRSLAESLNCSEQEARMISDQFHQAYKGIRDYTTRVVNFARSKGFVETITGRRRYLENINSDVEHLKNQAERQAVNSTIQGSAADIAKNAILKMEKNIERYREKLALGDNSVDLVMHLHDELIFEVPTGKAKKIAKVLSLTMENCVKLSVPLKVKLRIGRSWGEFKEVSV</sequence>
<evidence type="ECO:0000255" key="1">
    <source>
        <dbReference type="PROSITE-ProRule" id="PRU00541"/>
    </source>
</evidence>
<evidence type="ECO:0000255" key="2">
    <source>
        <dbReference type="PROSITE-ProRule" id="PRU00542"/>
    </source>
</evidence>
<evidence type="ECO:0000256" key="3">
    <source>
        <dbReference type="SAM" id="MobiDB-lite"/>
    </source>
</evidence>
<evidence type="ECO:0000269" key="4">
    <source>
    </source>
</evidence>
<evidence type="ECO:0000269" key="5">
    <source>
    </source>
</evidence>
<evidence type="ECO:0000269" key="6">
    <source>
    </source>
</evidence>
<evidence type="ECO:0000269" key="7">
    <source>
    </source>
</evidence>
<evidence type="ECO:0000269" key="8">
    <source>
    </source>
</evidence>
<evidence type="ECO:0000269" key="9">
    <source>
    </source>
</evidence>
<evidence type="ECO:0000269" key="10">
    <source>
    </source>
</evidence>
<evidence type="ECO:0000269" key="11">
    <source>
    </source>
</evidence>
<evidence type="ECO:0000303" key="12">
    <source>
    </source>
</evidence>
<evidence type="ECO:0000303" key="13">
    <source>
    </source>
</evidence>
<evidence type="ECO:0000305" key="14"/>
<evidence type="ECO:0000312" key="15">
    <source>
        <dbReference type="FlyBase" id="FBgn0002905"/>
    </source>
</evidence>
<keyword id="KW-0067">ATP-binding</keyword>
<keyword id="KW-0227">DNA damage</keyword>
<keyword id="KW-0234">DNA repair</keyword>
<keyword id="KW-0239">DNA-directed DNA polymerase</keyword>
<keyword id="KW-0378">Hydrolase</keyword>
<keyword id="KW-0547">Nucleotide-binding</keyword>
<keyword id="KW-0548">Nucleotidyltransferase</keyword>
<keyword id="KW-0539">Nucleus</keyword>
<keyword id="KW-1185">Reference proteome</keyword>
<keyword id="KW-0808">Transferase</keyword>